<comment type="function">
    <text evidence="2 3">Dolichyl-phosphate beta-glucosyltransferase that operates in the biosynthetic pathway of dolichol-linked oligosaccharides, the glycan precursors employed in protein asparagine (N)-glycosylation. The assembly of dolichol-linked oligosaccharides begins on the cytosolic side of the endoplasmic reticulum membrane and finishes in its lumen. The sequential addition of sugars to dolichol pyrophosphate produces dolichol-linked oligosaccharides containing fourteen sugars, including two GlcNAcs, nine mannoses and three glucoses. Once assembled, the oligosaccharide is transferred from the lipid to nascent proteins by oligosaccharyltransferases. Dolichyl-phosphate beta-glucosyltransferase produces dolichyl beta-D-glucosyl phosphate/Dol-P-Glc, the glucose donor substrate used sequentially by ALG6, ALG8 and ALG10 to add glucose residues on top of the Man(9)GlcNAc(2)-PP-Dol structure. These are the three last steps in the biosynthetic pathway of dolichol-linked oligosaccharides to produce Glc(3)Man(9)GlcNAc(2)-PP-Dol. The enzyme is most probably active on the cytoplasmic side of the endoplasmic reticulum while its product Dol-P-Glc is the substrate for ALG6, ALG8 and ALG11 in the lumen of the endoplasmic reticulum.</text>
</comment>
<comment type="catalytic activity">
    <reaction evidence="2">
        <text>a di-trans,poly-cis-dolichyl phosphate + UDP-alpha-D-glucose = a di-trans,poly-cis-dolichyl beta-D-glucosyl phosphate + UDP</text>
        <dbReference type="Rhea" id="RHEA:15401"/>
        <dbReference type="Rhea" id="RHEA-COMP:19498"/>
        <dbReference type="Rhea" id="RHEA-COMP:19502"/>
        <dbReference type="ChEBI" id="CHEBI:57525"/>
        <dbReference type="ChEBI" id="CHEBI:57683"/>
        <dbReference type="ChEBI" id="CHEBI:58223"/>
        <dbReference type="ChEBI" id="CHEBI:58885"/>
        <dbReference type="EC" id="2.4.1.117"/>
    </reaction>
    <physiologicalReaction direction="left-to-right" evidence="6">
        <dbReference type="Rhea" id="RHEA:15402"/>
    </physiologicalReaction>
</comment>
<comment type="pathway">
    <text evidence="2 3">Protein modification; protein glycosylation.</text>
</comment>
<comment type="interaction">
    <interactant intactId="EBI-11725055">
        <id>Q9Y673</id>
    </interactant>
    <interactant intactId="EBI-25475894">
        <id>P0DTC3</id>
        <label>3a</label>
    </interactant>
    <organismsDiffer>true</organismsDiffer>
    <experiments>4</experiments>
</comment>
<comment type="subcellular location">
    <subcellularLocation>
        <location evidence="2">Endoplasmic reticulum membrane</location>
        <topology evidence="1">Single-pass membrane protein</topology>
    </subcellularLocation>
</comment>
<comment type="alternative products">
    <event type="alternative splicing"/>
    <isoform>
        <id>Q9Y673-1</id>
        <name>1</name>
        <sequence type="displayed"/>
    </isoform>
    <isoform>
        <id>Q9Y673-2</id>
        <name>2</name>
        <sequence type="described" ref="VSP_041019"/>
    </isoform>
</comment>
<comment type="tissue specificity">
    <text evidence="2">Expressed in pancreas, placenta, liver, heart, brain, kidney, skeletal muscle, and lung.</text>
</comment>
<comment type="disease" evidence="3">
    <disease id="DI-06514">
        <name>Polycystic kidney disease 7</name>
        <acronym>PKD7</acronym>
        <description>A form of polycystic kidney disease, a disorder characterized by progressive formation and enlargement of cysts in both kidneys, typically leading to end-stage renal disease in adult life. Cysts also occur in other organs, particularly the liver. PKD7 inheritance is autosomal dominant.</description>
        <dbReference type="MIM" id="620056"/>
    </disease>
    <text>The disease is caused by variants affecting the gene represented in this entry.</text>
</comment>
<comment type="similarity">
    <text evidence="5">Belongs to the glycosyltransferase 2 family.</text>
</comment>
<reference key="1">
    <citation type="journal article" date="1999" name="Proc. Natl. Acad. Sci. U.S.A.">
        <title>A mutation in the human ortholog of the Saccharomyces cerevisiae ALG6 gene causes carbohydrate-deficient glycoprotein syndrome type-Ic.</title>
        <authorList>
            <person name="Imbach T."/>
            <person name="Burda P."/>
            <person name="Kuhnert P."/>
            <person name="Wevers R.A."/>
            <person name="Aebi M."/>
            <person name="Berger E.G."/>
            <person name="Hennet T."/>
        </authorList>
    </citation>
    <scope>NUCLEOTIDE SEQUENCE [MRNA] (ISOFORM 1)</scope>
    <scope>FUNCTION</scope>
    <scope>CATALYTIC ACTIVITY</scope>
    <scope>PATHWAY</scope>
    <scope>SUBCELLULAR LOCATION</scope>
    <scope>TISSUE SPECIFICITY</scope>
</reference>
<reference key="2">
    <citation type="journal article" date="2000" name="Genome Res.">
        <title>Cloning and functional analysis of cDNAs with open reading frames for 300 previously undefined genes expressed in CD34+ hematopoietic stem/progenitor cells.</title>
        <authorList>
            <person name="Zhang Q.-H."/>
            <person name="Ye M."/>
            <person name="Wu X.-Y."/>
            <person name="Ren S.-X."/>
            <person name="Zhao M."/>
            <person name="Zhao C.-J."/>
            <person name="Fu G."/>
            <person name="Shen Y."/>
            <person name="Fan H.-Y."/>
            <person name="Lu G."/>
            <person name="Zhong M."/>
            <person name="Xu X.-R."/>
            <person name="Han Z.-G."/>
            <person name="Zhang J.-W."/>
            <person name="Tao J."/>
            <person name="Huang Q.-H."/>
            <person name="Zhou J."/>
            <person name="Hu G.-X."/>
            <person name="Gu J."/>
            <person name="Chen S.-J."/>
            <person name="Chen Z."/>
        </authorList>
    </citation>
    <scope>NUCLEOTIDE SEQUENCE [LARGE SCALE MRNA] (ISOFORM 1)</scope>
    <source>
        <tissue>Umbilical cord blood</tissue>
    </source>
</reference>
<reference key="3">
    <citation type="journal article" date="2004" name="Nat. Genet.">
        <title>Complete sequencing and characterization of 21,243 full-length human cDNAs.</title>
        <authorList>
            <person name="Ota T."/>
            <person name="Suzuki Y."/>
            <person name="Nishikawa T."/>
            <person name="Otsuki T."/>
            <person name="Sugiyama T."/>
            <person name="Irie R."/>
            <person name="Wakamatsu A."/>
            <person name="Hayashi K."/>
            <person name="Sato H."/>
            <person name="Nagai K."/>
            <person name="Kimura K."/>
            <person name="Makita H."/>
            <person name="Sekine M."/>
            <person name="Obayashi M."/>
            <person name="Nishi T."/>
            <person name="Shibahara T."/>
            <person name="Tanaka T."/>
            <person name="Ishii S."/>
            <person name="Yamamoto J."/>
            <person name="Saito K."/>
            <person name="Kawai Y."/>
            <person name="Isono Y."/>
            <person name="Nakamura Y."/>
            <person name="Nagahari K."/>
            <person name="Murakami K."/>
            <person name="Yasuda T."/>
            <person name="Iwayanagi T."/>
            <person name="Wagatsuma M."/>
            <person name="Shiratori A."/>
            <person name="Sudo H."/>
            <person name="Hosoiri T."/>
            <person name="Kaku Y."/>
            <person name="Kodaira H."/>
            <person name="Kondo H."/>
            <person name="Sugawara M."/>
            <person name="Takahashi M."/>
            <person name="Kanda K."/>
            <person name="Yokoi T."/>
            <person name="Furuya T."/>
            <person name="Kikkawa E."/>
            <person name="Omura Y."/>
            <person name="Abe K."/>
            <person name="Kamihara K."/>
            <person name="Katsuta N."/>
            <person name="Sato K."/>
            <person name="Tanikawa M."/>
            <person name="Yamazaki M."/>
            <person name="Ninomiya K."/>
            <person name="Ishibashi T."/>
            <person name="Yamashita H."/>
            <person name="Murakawa K."/>
            <person name="Fujimori K."/>
            <person name="Tanai H."/>
            <person name="Kimata M."/>
            <person name="Watanabe M."/>
            <person name="Hiraoka S."/>
            <person name="Chiba Y."/>
            <person name="Ishida S."/>
            <person name="Ono Y."/>
            <person name="Takiguchi S."/>
            <person name="Watanabe S."/>
            <person name="Yosida M."/>
            <person name="Hotuta T."/>
            <person name="Kusano J."/>
            <person name="Kanehori K."/>
            <person name="Takahashi-Fujii A."/>
            <person name="Hara H."/>
            <person name="Tanase T.-O."/>
            <person name="Nomura Y."/>
            <person name="Togiya S."/>
            <person name="Komai F."/>
            <person name="Hara R."/>
            <person name="Takeuchi K."/>
            <person name="Arita M."/>
            <person name="Imose N."/>
            <person name="Musashino K."/>
            <person name="Yuuki H."/>
            <person name="Oshima A."/>
            <person name="Sasaki N."/>
            <person name="Aotsuka S."/>
            <person name="Yoshikawa Y."/>
            <person name="Matsunawa H."/>
            <person name="Ichihara T."/>
            <person name="Shiohata N."/>
            <person name="Sano S."/>
            <person name="Moriya S."/>
            <person name="Momiyama H."/>
            <person name="Satoh N."/>
            <person name="Takami S."/>
            <person name="Terashima Y."/>
            <person name="Suzuki O."/>
            <person name="Nakagawa S."/>
            <person name="Senoh A."/>
            <person name="Mizoguchi H."/>
            <person name="Goto Y."/>
            <person name="Shimizu F."/>
            <person name="Wakebe H."/>
            <person name="Hishigaki H."/>
            <person name="Watanabe T."/>
            <person name="Sugiyama A."/>
            <person name="Takemoto M."/>
            <person name="Kawakami B."/>
            <person name="Yamazaki M."/>
            <person name="Watanabe K."/>
            <person name="Kumagai A."/>
            <person name="Itakura S."/>
            <person name="Fukuzumi Y."/>
            <person name="Fujimori Y."/>
            <person name="Komiyama M."/>
            <person name="Tashiro H."/>
            <person name="Tanigami A."/>
            <person name="Fujiwara T."/>
            <person name="Ono T."/>
            <person name="Yamada K."/>
            <person name="Fujii Y."/>
            <person name="Ozaki K."/>
            <person name="Hirao M."/>
            <person name="Ohmori Y."/>
            <person name="Kawabata A."/>
            <person name="Hikiji T."/>
            <person name="Kobatake N."/>
            <person name="Inagaki H."/>
            <person name="Ikema Y."/>
            <person name="Okamoto S."/>
            <person name="Okitani R."/>
            <person name="Kawakami T."/>
            <person name="Noguchi S."/>
            <person name="Itoh T."/>
            <person name="Shigeta K."/>
            <person name="Senba T."/>
            <person name="Matsumura K."/>
            <person name="Nakajima Y."/>
            <person name="Mizuno T."/>
            <person name="Morinaga M."/>
            <person name="Sasaki M."/>
            <person name="Togashi T."/>
            <person name="Oyama M."/>
            <person name="Hata H."/>
            <person name="Watanabe M."/>
            <person name="Komatsu T."/>
            <person name="Mizushima-Sugano J."/>
            <person name="Satoh T."/>
            <person name="Shirai Y."/>
            <person name="Takahashi Y."/>
            <person name="Nakagawa K."/>
            <person name="Okumura K."/>
            <person name="Nagase T."/>
            <person name="Nomura N."/>
            <person name="Kikuchi H."/>
            <person name="Masuho Y."/>
            <person name="Yamashita R."/>
            <person name="Nakai K."/>
            <person name="Yada T."/>
            <person name="Nakamura Y."/>
            <person name="Ohara O."/>
            <person name="Isogai T."/>
            <person name="Sugano S."/>
        </authorList>
    </citation>
    <scope>NUCLEOTIDE SEQUENCE [LARGE SCALE MRNA] (ISOFORM 2)</scope>
</reference>
<reference key="4">
    <citation type="journal article" date="2004" name="Nature">
        <title>The DNA sequence and analysis of human chromosome 13.</title>
        <authorList>
            <person name="Dunham A."/>
            <person name="Matthews L.H."/>
            <person name="Burton J."/>
            <person name="Ashurst J.L."/>
            <person name="Howe K.L."/>
            <person name="Ashcroft K.J."/>
            <person name="Beare D.M."/>
            <person name="Burford D.C."/>
            <person name="Hunt S.E."/>
            <person name="Griffiths-Jones S."/>
            <person name="Jones M.C."/>
            <person name="Keenan S.J."/>
            <person name="Oliver K."/>
            <person name="Scott C.E."/>
            <person name="Ainscough R."/>
            <person name="Almeida J.P."/>
            <person name="Ambrose K.D."/>
            <person name="Andrews D.T."/>
            <person name="Ashwell R.I.S."/>
            <person name="Babbage A.K."/>
            <person name="Bagguley C.L."/>
            <person name="Bailey J."/>
            <person name="Bannerjee R."/>
            <person name="Barlow K.F."/>
            <person name="Bates K."/>
            <person name="Beasley H."/>
            <person name="Bird C.P."/>
            <person name="Bray-Allen S."/>
            <person name="Brown A.J."/>
            <person name="Brown J.Y."/>
            <person name="Burrill W."/>
            <person name="Carder C."/>
            <person name="Carter N.P."/>
            <person name="Chapman J.C."/>
            <person name="Clamp M.E."/>
            <person name="Clark S.Y."/>
            <person name="Clarke G."/>
            <person name="Clee C.M."/>
            <person name="Clegg S.C."/>
            <person name="Cobley V."/>
            <person name="Collins J.E."/>
            <person name="Corby N."/>
            <person name="Coville G.J."/>
            <person name="Deloukas P."/>
            <person name="Dhami P."/>
            <person name="Dunham I."/>
            <person name="Dunn M."/>
            <person name="Earthrowl M.E."/>
            <person name="Ellington A.G."/>
            <person name="Faulkner L."/>
            <person name="Frankish A.G."/>
            <person name="Frankland J."/>
            <person name="French L."/>
            <person name="Garner P."/>
            <person name="Garnett J."/>
            <person name="Gilbert J.G.R."/>
            <person name="Gilson C.J."/>
            <person name="Ghori J."/>
            <person name="Grafham D.V."/>
            <person name="Gribble S.M."/>
            <person name="Griffiths C."/>
            <person name="Hall R.E."/>
            <person name="Hammond S."/>
            <person name="Harley J.L."/>
            <person name="Hart E.A."/>
            <person name="Heath P.D."/>
            <person name="Howden P.J."/>
            <person name="Huckle E.J."/>
            <person name="Hunt P.J."/>
            <person name="Hunt A.R."/>
            <person name="Johnson C."/>
            <person name="Johnson D."/>
            <person name="Kay M."/>
            <person name="Kimberley A.M."/>
            <person name="King A."/>
            <person name="Laird G.K."/>
            <person name="Langford C.J."/>
            <person name="Lawlor S."/>
            <person name="Leongamornlert D.A."/>
            <person name="Lloyd D.M."/>
            <person name="Lloyd C."/>
            <person name="Loveland J.E."/>
            <person name="Lovell J."/>
            <person name="Martin S."/>
            <person name="Mashreghi-Mohammadi M."/>
            <person name="McLaren S.J."/>
            <person name="McMurray A."/>
            <person name="Milne S."/>
            <person name="Moore M.J.F."/>
            <person name="Nickerson T."/>
            <person name="Palmer S.A."/>
            <person name="Pearce A.V."/>
            <person name="Peck A.I."/>
            <person name="Pelan S."/>
            <person name="Phillimore B."/>
            <person name="Porter K.M."/>
            <person name="Rice C.M."/>
            <person name="Searle S."/>
            <person name="Sehra H.K."/>
            <person name="Shownkeen R."/>
            <person name="Skuce C.D."/>
            <person name="Smith M."/>
            <person name="Steward C.A."/>
            <person name="Sycamore N."/>
            <person name="Tester J."/>
            <person name="Thomas D.W."/>
            <person name="Tracey A."/>
            <person name="Tromans A."/>
            <person name="Tubby B."/>
            <person name="Wall M."/>
            <person name="Wallis J.M."/>
            <person name="West A.P."/>
            <person name="Whitehead S.L."/>
            <person name="Willey D.L."/>
            <person name="Wilming L."/>
            <person name="Wray P.W."/>
            <person name="Wright M.W."/>
            <person name="Young L."/>
            <person name="Coulson A."/>
            <person name="Durbin R.M."/>
            <person name="Hubbard T."/>
            <person name="Sulston J.E."/>
            <person name="Beck S."/>
            <person name="Bentley D.R."/>
            <person name="Rogers J."/>
            <person name="Ross M.T."/>
        </authorList>
    </citation>
    <scope>NUCLEOTIDE SEQUENCE [LARGE SCALE GENOMIC DNA]</scope>
</reference>
<reference key="5">
    <citation type="submission" date="2005-07" db="EMBL/GenBank/DDBJ databases">
        <authorList>
            <person name="Mural R.J."/>
            <person name="Istrail S."/>
            <person name="Sutton G.G."/>
            <person name="Florea L."/>
            <person name="Halpern A.L."/>
            <person name="Mobarry C.M."/>
            <person name="Lippert R."/>
            <person name="Walenz B."/>
            <person name="Shatkay H."/>
            <person name="Dew I."/>
            <person name="Miller J.R."/>
            <person name="Flanigan M.J."/>
            <person name="Edwards N.J."/>
            <person name="Bolanos R."/>
            <person name="Fasulo D."/>
            <person name="Halldorsson B.V."/>
            <person name="Hannenhalli S."/>
            <person name="Turner R."/>
            <person name="Yooseph S."/>
            <person name="Lu F."/>
            <person name="Nusskern D.R."/>
            <person name="Shue B.C."/>
            <person name="Zheng X.H."/>
            <person name="Zhong F."/>
            <person name="Delcher A.L."/>
            <person name="Huson D.H."/>
            <person name="Kravitz S.A."/>
            <person name="Mouchard L."/>
            <person name="Reinert K."/>
            <person name="Remington K.A."/>
            <person name="Clark A.G."/>
            <person name="Waterman M.S."/>
            <person name="Eichler E.E."/>
            <person name="Adams M.D."/>
            <person name="Hunkapiller M.W."/>
            <person name="Myers E.W."/>
            <person name="Venter J.C."/>
        </authorList>
    </citation>
    <scope>NUCLEOTIDE SEQUENCE [LARGE SCALE GENOMIC DNA]</scope>
</reference>
<reference key="6">
    <citation type="journal article" date="2004" name="Genome Res.">
        <title>The status, quality, and expansion of the NIH full-length cDNA project: the Mammalian Gene Collection (MGC).</title>
        <authorList>
            <consortium name="The MGC Project Team"/>
        </authorList>
    </citation>
    <scope>NUCLEOTIDE SEQUENCE [LARGE SCALE MRNA] (ISOFORM 1)</scope>
    <source>
        <tissue>Prostate</tissue>
    </source>
</reference>
<reference key="7">
    <citation type="journal article" date="2011" name="BMC Syst. Biol.">
        <title>Initial characterization of the human central proteome.</title>
        <authorList>
            <person name="Burkard T.R."/>
            <person name="Planyavsky M."/>
            <person name="Kaupe I."/>
            <person name="Breitwieser F.P."/>
            <person name="Buerckstuemmer T."/>
            <person name="Bennett K.L."/>
            <person name="Superti-Furga G."/>
            <person name="Colinge J."/>
        </authorList>
    </citation>
    <scope>IDENTIFICATION BY MASS SPECTROMETRY [LARGE SCALE ANALYSIS]</scope>
</reference>
<reference key="8">
    <citation type="journal article" date="2013" name="J. Proteome Res.">
        <title>Toward a comprehensive characterization of a human cancer cell phosphoproteome.</title>
        <authorList>
            <person name="Zhou H."/>
            <person name="Di Palma S."/>
            <person name="Preisinger C."/>
            <person name="Peng M."/>
            <person name="Polat A.N."/>
            <person name="Heck A.J."/>
            <person name="Mohammed S."/>
        </authorList>
    </citation>
    <scope>IDENTIFICATION BY MASS SPECTROMETRY [LARGE SCALE ANALYSIS]</scope>
    <source>
        <tissue>Cervix carcinoma</tissue>
        <tissue>Erythroleukemia</tissue>
    </source>
</reference>
<reference key="9">
    <citation type="journal article" date="2014" name="J. Proteomics">
        <title>An enzyme assisted RP-RPLC approach for in-depth analysis of human liver phosphoproteome.</title>
        <authorList>
            <person name="Bian Y."/>
            <person name="Song C."/>
            <person name="Cheng K."/>
            <person name="Dong M."/>
            <person name="Wang F."/>
            <person name="Huang J."/>
            <person name="Sun D."/>
            <person name="Wang L."/>
            <person name="Ye M."/>
            <person name="Zou H."/>
        </authorList>
    </citation>
    <scope>IDENTIFICATION BY MASS SPECTROMETRY [LARGE SCALE ANALYSIS]</scope>
    <source>
        <tissue>Liver</tissue>
    </source>
</reference>
<reference key="10">
    <citation type="journal article" date="2015" name="Proteomics">
        <title>N-terminome analysis of the human mitochondrial proteome.</title>
        <authorList>
            <person name="Vaca Jacome A.S."/>
            <person name="Rabilloud T."/>
            <person name="Schaeffer-Reiss C."/>
            <person name="Rompais M."/>
            <person name="Ayoub D."/>
            <person name="Lane L."/>
            <person name="Bairoch A."/>
            <person name="Van Dorsselaer A."/>
            <person name="Carapito C."/>
        </authorList>
    </citation>
    <scope>IDENTIFICATION BY MASS SPECTROMETRY [LARGE SCALE ANALYSIS]</scope>
</reference>
<reference key="11">
    <citation type="journal article" date="2022" name="Am. J. Hum. Genet.">
        <title>Monoallelic pathogenic ALG5 variants cause atypical polycystic kidney disease and interstitial fibrosis.</title>
        <authorList>
            <consortium name="Genomics England Research Consortium"/>
            <consortium name="Genkyst Study Group"/>
            <person name="Lemoine H."/>
            <person name="Raud L."/>
            <person name="Foulquier F."/>
            <person name="Sayer J.A."/>
            <person name="Lambert B."/>
            <person name="Olinger E."/>
            <person name="Lefevre S."/>
            <person name="Knebelmann B."/>
            <person name="Harris P.C."/>
            <person name="Trouve P."/>
            <person name="Despres A."/>
            <person name="Duneau G."/>
            <person name="Matignon M."/>
            <person name="Poyet A."/>
            <person name="Jourde-Chiche N."/>
            <person name="Guerrot D."/>
            <person name="Lemoine S."/>
            <person name="Seret G."/>
            <person name="Barroso-Gil M."/>
            <person name="Bingham C."/>
            <person name="Gilbert R."/>
            <person name="Le Meur Y."/>
            <person name="Audrezet M.P."/>
            <person name="Cornec-Le Gall E."/>
        </authorList>
    </citation>
    <scope>VARIANTS PKD7 HIS-208; HIS-212 AND 258-TRP--ASN-324 DEL</scope>
    <scope>INVOLVEMENT IN PKD7</scope>
    <scope>CHARACTERIZATION OF VARIANTS PKD7 HIS-208 AND HIS-212</scope>
    <scope>FUNCTION</scope>
    <scope>PATHWAY</scope>
</reference>
<name>ALG5_HUMAN</name>
<sequence>MAPLLLQLAVLGAALAAAALVLISIVAFTTATKMPALHRHEEEKFFLNAKGQKETLPSIWDSPTKQLSVVVPSYNEEKRLPVMMDEALSYLEKRQKRDPAFTYEVIVVDDGSKDQTSKVAFKYCQKYGSDKVRVITLVKNRGKGGAIRMGIFSSRGEKILMADADGATKFPDVEKLEKGLNDLQPWPNQMAIACGSRAHLEKESIAQRSYFRTLLMYGFHFLVWFLCVKGIRDTQCGFKLFTREAASRTFSSLHVERWAFDVELLYIAQFFKIPIAEIAVNWTEIEGSKLVPFWSWLQMGKDLLFIRLRYLTGAWRLEQTRKMN</sequence>
<gene>
    <name evidence="8" type="primary">ALG5</name>
    <name evidence="7" type="ORF">HSPC149</name>
</gene>
<dbReference type="EC" id="2.4.1.117" evidence="2"/>
<dbReference type="EMBL" id="AF102850">
    <property type="protein sequence ID" value="AAD41465.1"/>
    <property type="molecule type" value="mRNA"/>
</dbReference>
<dbReference type="EMBL" id="AF161498">
    <property type="protein sequence ID" value="AAF29113.1"/>
    <property type="molecule type" value="mRNA"/>
</dbReference>
<dbReference type="EMBL" id="AK299085">
    <property type="protein sequence ID" value="BAG61149.1"/>
    <property type="molecule type" value="mRNA"/>
</dbReference>
<dbReference type="EMBL" id="AL138706">
    <property type="status" value="NOT_ANNOTATED_CDS"/>
    <property type="molecule type" value="Genomic_DNA"/>
</dbReference>
<dbReference type="EMBL" id="CH471075">
    <property type="protein sequence ID" value="EAX08578.1"/>
    <property type="molecule type" value="Genomic_DNA"/>
</dbReference>
<dbReference type="EMBL" id="BC012531">
    <property type="protein sequence ID" value="AAH12531.1"/>
    <property type="molecule type" value="mRNA"/>
</dbReference>
<dbReference type="CCDS" id="CCDS45033.1">
    <molecule id="Q9Y673-2"/>
</dbReference>
<dbReference type="CCDS" id="CCDS9361.1">
    <molecule id="Q9Y673-1"/>
</dbReference>
<dbReference type="PIR" id="T51776">
    <property type="entry name" value="T51776"/>
</dbReference>
<dbReference type="RefSeq" id="NP_001135836.1">
    <molecule id="Q9Y673-2"/>
    <property type="nucleotide sequence ID" value="NM_001142364.1"/>
</dbReference>
<dbReference type="RefSeq" id="NP_037470.1">
    <molecule id="Q9Y673-1"/>
    <property type="nucleotide sequence ID" value="NM_013338.5"/>
</dbReference>
<dbReference type="SMR" id="Q9Y673"/>
<dbReference type="BioGRID" id="118935">
    <property type="interactions" value="78"/>
</dbReference>
<dbReference type="FunCoup" id="Q9Y673">
    <property type="interactions" value="2139"/>
</dbReference>
<dbReference type="IntAct" id="Q9Y673">
    <property type="interactions" value="31"/>
</dbReference>
<dbReference type="MINT" id="Q9Y673"/>
<dbReference type="STRING" id="9606.ENSP00000239891"/>
<dbReference type="CAZy" id="GT2">
    <property type="family name" value="Glycosyltransferase Family 2"/>
</dbReference>
<dbReference type="GlyCosmos" id="Q9Y673">
    <property type="glycosylation" value="1 site, No reported glycans"/>
</dbReference>
<dbReference type="GlyGen" id="Q9Y673">
    <property type="glycosylation" value="1 site, 1 O-linked glycan (1 site)"/>
</dbReference>
<dbReference type="iPTMnet" id="Q9Y673"/>
<dbReference type="PhosphoSitePlus" id="Q9Y673"/>
<dbReference type="SwissPalm" id="Q9Y673"/>
<dbReference type="BioMuta" id="ALG5"/>
<dbReference type="DMDM" id="27734217"/>
<dbReference type="jPOST" id="Q9Y673"/>
<dbReference type="MassIVE" id="Q9Y673"/>
<dbReference type="PaxDb" id="9606-ENSP00000239891"/>
<dbReference type="PeptideAtlas" id="Q9Y673"/>
<dbReference type="ProteomicsDB" id="86611">
    <molecule id="Q9Y673-1"/>
</dbReference>
<dbReference type="ProteomicsDB" id="86612">
    <molecule id="Q9Y673-2"/>
</dbReference>
<dbReference type="Pumba" id="Q9Y673"/>
<dbReference type="Antibodypedia" id="2385">
    <property type="antibodies" value="152 antibodies from 19 providers"/>
</dbReference>
<dbReference type="DNASU" id="29880"/>
<dbReference type="Ensembl" id="ENST00000239891.4">
    <molecule id="Q9Y673-1"/>
    <property type="protein sequence ID" value="ENSP00000239891.3"/>
    <property type="gene ID" value="ENSG00000120697.10"/>
</dbReference>
<dbReference type="Ensembl" id="ENST00000443765.6">
    <molecule id="Q9Y673-2"/>
    <property type="protein sequence ID" value="ENSP00000390533.1"/>
    <property type="gene ID" value="ENSG00000120697.10"/>
</dbReference>
<dbReference type="GeneID" id="29880"/>
<dbReference type="KEGG" id="hsa:29880"/>
<dbReference type="MANE-Select" id="ENST00000239891.4">
    <property type="protein sequence ID" value="ENSP00000239891.3"/>
    <property type="RefSeq nucleotide sequence ID" value="NM_013338.5"/>
    <property type="RefSeq protein sequence ID" value="NP_037470.1"/>
</dbReference>
<dbReference type="UCSC" id="uc001uvy.4">
    <molecule id="Q9Y673-1"/>
    <property type="organism name" value="human"/>
</dbReference>
<dbReference type="AGR" id="HGNC:20266"/>
<dbReference type="CTD" id="29880"/>
<dbReference type="DisGeNET" id="29880"/>
<dbReference type="GeneCards" id="ALG5"/>
<dbReference type="GeneReviews" id="ALG5"/>
<dbReference type="HGNC" id="HGNC:20266">
    <property type="gene designation" value="ALG5"/>
</dbReference>
<dbReference type="HPA" id="ENSG00000120697">
    <property type="expression patterns" value="Low tissue specificity"/>
</dbReference>
<dbReference type="MalaCards" id="ALG5"/>
<dbReference type="MIM" id="604565">
    <property type="type" value="gene"/>
</dbReference>
<dbReference type="MIM" id="620056">
    <property type="type" value="phenotype"/>
</dbReference>
<dbReference type="neXtProt" id="NX_Q9Y673"/>
<dbReference type="OpenTargets" id="ENSG00000120697"/>
<dbReference type="Orphanet" id="730">
    <property type="disease" value="Autosomal dominant polycystic kidney disease"/>
</dbReference>
<dbReference type="PharmGKB" id="PA134977026"/>
<dbReference type="VEuPathDB" id="HostDB:ENSG00000120697"/>
<dbReference type="eggNOG" id="KOG2977">
    <property type="taxonomic scope" value="Eukaryota"/>
</dbReference>
<dbReference type="GeneTree" id="ENSGT00940000153481"/>
<dbReference type="HOGENOM" id="CLU_033536_9_1_1"/>
<dbReference type="InParanoid" id="Q9Y673"/>
<dbReference type="OMA" id="HMVNTDA"/>
<dbReference type="OrthoDB" id="3784at2759"/>
<dbReference type="PAN-GO" id="Q9Y673">
    <property type="GO annotations" value="2 GO annotations based on evolutionary models"/>
</dbReference>
<dbReference type="PhylomeDB" id="Q9Y673"/>
<dbReference type="TreeFam" id="TF314844"/>
<dbReference type="PathwayCommons" id="Q9Y673"/>
<dbReference type="Reactome" id="R-HSA-480985">
    <property type="pathway name" value="Synthesis of dolichyl-phosphate-glucose"/>
</dbReference>
<dbReference type="SABIO-RK" id="Q9Y673"/>
<dbReference type="SignaLink" id="Q9Y673"/>
<dbReference type="UniPathway" id="UPA00378"/>
<dbReference type="BioGRID-ORCS" id="29880">
    <property type="hits" value="107 hits in 1169 CRISPR screens"/>
</dbReference>
<dbReference type="ChiTaRS" id="ALG5">
    <property type="organism name" value="human"/>
</dbReference>
<dbReference type="GenomeRNAi" id="29880"/>
<dbReference type="Pharos" id="Q9Y673">
    <property type="development level" value="Tbio"/>
</dbReference>
<dbReference type="PRO" id="PR:Q9Y673"/>
<dbReference type="Proteomes" id="UP000005640">
    <property type="component" value="Chromosome 13"/>
</dbReference>
<dbReference type="RNAct" id="Q9Y673">
    <property type="molecule type" value="protein"/>
</dbReference>
<dbReference type="Bgee" id="ENSG00000120697">
    <property type="expression patterns" value="Expressed in parotid gland and 205 other cell types or tissues"/>
</dbReference>
<dbReference type="ExpressionAtlas" id="Q9Y673">
    <property type="expression patterns" value="baseline and differential"/>
</dbReference>
<dbReference type="GO" id="GO:0098556">
    <property type="term" value="C:cytoplasmic side of rough endoplasmic reticulum membrane"/>
    <property type="evidence" value="ECO:0000316"/>
    <property type="project" value="UniProtKB"/>
</dbReference>
<dbReference type="GO" id="GO:0005789">
    <property type="term" value="C:endoplasmic reticulum membrane"/>
    <property type="evidence" value="ECO:0000318"/>
    <property type="project" value="GO_Central"/>
</dbReference>
<dbReference type="GO" id="GO:0016020">
    <property type="term" value="C:membrane"/>
    <property type="evidence" value="ECO:0007005"/>
    <property type="project" value="UniProtKB"/>
</dbReference>
<dbReference type="GO" id="GO:0004581">
    <property type="term" value="F:dolichyl-phosphate beta-glucosyltransferase activity"/>
    <property type="evidence" value="ECO:0000316"/>
    <property type="project" value="UniProtKB"/>
</dbReference>
<dbReference type="GO" id="GO:0007368">
    <property type="term" value="P:determination of left/right symmetry"/>
    <property type="evidence" value="ECO:0007669"/>
    <property type="project" value="Ensembl"/>
</dbReference>
<dbReference type="GO" id="GO:0006488">
    <property type="term" value="P:dolichol-linked oligosaccharide biosynthetic process"/>
    <property type="evidence" value="ECO:0000315"/>
    <property type="project" value="UniProtKB"/>
</dbReference>
<dbReference type="GO" id="GO:0006487">
    <property type="term" value="P:protein N-linked glycosylation"/>
    <property type="evidence" value="ECO:0000315"/>
    <property type="project" value="UniProtKB"/>
</dbReference>
<dbReference type="GO" id="GO:0018279">
    <property type="term" value="P:protein N-linked glycosylation via asparagine"/>
    <property type="evidence" value="ECO:0000304"/>
    <property type="project" value="Reactome"/>
</dbReference>
<dbReference type="CDD" id="cd04188">
    <property type="entry name" value="DPG_synthase"/>
    <property type="match status" value="1"/>
</dbReference>
<dbReference type="FunFam" id="3.90.550.10:FF:000068">
    <property type="entry name" value="ALG5, dolichyl-phosphate beta-glucosyltransferase"/>
    <property type="match status" value="1"/>
</dbReference>
<dbReference type="Gene3D" id="3.90.550.10">
    <property type="entry name" value="Spore Coat Polysaccharide Biosynthesis Protein SpsA, Chain A"/>
    <property type="match status" value="1"/>
</dbReference>
<dbReference type="InterPro" id="IPR035518">
    <property type="entry name" value="DPG_synthase"/>
</dbReference>
<dbReference type="InterPro" id="IPR001173">
    <property type="entry name" value="Glyco_trans_2-like"/>
</dbReference>
<dbReference type="InterPro" id="IPR029044">
    <property type="entry name" value="Nucleotide-diphossugar_trans"/>
</dbReference>
<dbReference type="PANTHER" id="PTHR10859:SF91">
    <property type="entry name" value="DOLICHYL-PHOSPHATE BETA-GLUCOSYLTRANSFERASE"/>
    <property type="match status" value="1"/>
</dbReference>
<dbReference type="PANTHER" id="PTHR10859">
    <property type="entry name" value="GLYCOSYL TRANSFERASE"/>
    <property type="match status" value="1"/>
</dbReference>
<dbReference type="Pfam" id="PF00535">
    <property type="entry name" value="Glycos_transf_2"/>
    <property type="match status" value="1"/>
</dbReference>
<dbReference type="SUPFAM" id="SSF53448">
    <property type="entry name" value="Nucleotide-diphospho-sugar transferases"/>
    <property type="match status" value="1"/>
</dbReference>
<organism>
    <name type="scientific">Homo sapiens</name>
    <name type="common">Human</name>
    <dbReference type="NCBI Taxonomy" id="9606"/>
    <lineage>
        <taxon>Eukaryota</taxon>
        <taxon>Metazoa</taxon>
        <taxon>Chordata</taxon>
        <taxon>Craniata</taxon>
        <taxon>Vertebrata</taxon>
        <taxon>Euteleostomi</taxon>
        <taxon>Mammalia</taxon>
        <taxon>Eutheria</taxon>
        <taxon>Euarchontoglires</taxon>
        <taxon>Primates</taxon>
        <taxon>Haplorrhini</taxon>
        <taxon>Catarrhini</taxon>
        <taxon>Hominidae</taxon>
        <taxon>Homo</taxon>
    </lineage>
</organism>
<accession>Q9Y673</accession>
<accession>B4DR37</accession>
<accession>Q5TBA6</accession>
<feature type="chain" id="PRO_0000059098" description="Dolichyl-phosphate beta-glucosyltransferase">
    <location>
        <begin position="1"/>
        <end position="324"/>
    </location>
</feature>
<feature type="topological domain" description="Lumenal" evidence="1">
    <location>
        <begin position="1"/>
        <end position="7"/>
    </location>
</feature>
<feature type="transmembrane region" description="Helical; Signal-anchor for type II membrane protein" evidence="1">
    <location>
        <begin position="8"/>
        <end position="28"/>
    </location>
</feature>
<feature type="topological domain" description="Cytoplasmic" evidence="1">
    <location>
        <begin position="29"/>
        <end position="324"/>
    </location>
</feature>
<feature type="splice variant" id="VSP_041019" description="In isoform 2." evidence="4">
    <location>
        <begin position="95"/>
        <end position="124"/>
    </location>
</feature>
<feature type="sequence variant" id="VAR_087727" description="In PKD7; loss of function in protein N-linked glycosylation; unable to rescue defective PKD1 glycosylation and maturation in ALG5-deficient cells; dbSNP:rs749484470." evidence="3">
    <original>R</original>
    <variation>H</variation>
    <location>
        <position position="208"/>
    </location>
</feature>
<feature type="sequence variant" id="VAR_087728" description="In PKD7; loss of function in protein N-linked glycosylation; unable to rescue defective PKD1 glycosylation and maturation in ALG5-deficient cells; dbSNP:rs1332833799." evidence="3">
    <original>R</original>
    <variation>H</variation>
    <location>
        <position position="212"/>
    </location>
</feature>
<feature type="sequence variant" id="VAR_087729" description="In PKD7." evidence="3">
    <location>
        <begin position="258"/>
        <end position="324"/>
    </location>
</feature>
<proteinExistence type="evidence at protein level"/>
<protein>
    <recommendedName>
        <fullName evidence="6">Dolichyl-phosphate beta-glucosyltransferase</fullName>
        <shortName evidence="6">DolP-glucosyltransferase</shortName>
        <ecNumber evidence="2">2.4.1.117</ecNumber>
    </recommendedName>
    <alternativeName>
        <fullName evidence="8">Asparagine-linked glycosylation protein 5 homolog</fullName>
    </alternativeName>
</protein>
<evidence type="ECO:0000255" key="1"/>
<evidence type="ECO:0000269" key="2">
    <source>
    </source>
</evidence>
<evidence type="ECO:0000269" key="3">
    <source>
    </source>
</evidence>
<evidence type="ECO:0000303" key="4">
    <source>
    </source>
</evidence>
<evidence type="ECO:0000305" key="5"/>
<evidence type="ECO:0000305" key="6">
    <source>
    </source>
</evidence>
<evidence type="ECO:0000312" key="7">
    <source>
        <dbReference type="EMBL" id="AAF29113.1"/>
    </source>
</evidence>
<evidence type="ECO:0000312" key="8">
    <source>
        <dbReference type="HGNC" id="HGNC:20266"/>
    </source>
</evidence>
<keyword id="KW-0025">Alternative splicing</keyword>
<keyword id="KW-0225">Disease variant</keyword>
<keyword id="KW-0256">Endoplasmic reticulum</keyword>
<keyword id="KW-0328">Glycosyltransferase</keyword>
<keyword id="KW-0472">Membrane</keyword>
<keyword id="KW-1267">Proteomics identification</keyword>
<keyword id="KW-1185">Reference proteome</keyword>
<keyword id="KW-0735">Signal-anchor</keyword>
<keyword id="KW-0808">Transferase</keyword>
<keyword id="KW-0812">Transmembrane</keyword>
<keyword id="KW-1133">Transmembrane helix</keyword>